<evidence type="ECO:0000255" key="1">
    <source>
        <dbReference type="HAMAP-Rule" id="MF_00073"/>
    </source>
</evidence>
<evidence type="ECO:0000256" key="2">
    <source>
        <dbReference type="SAM" id="MobiDB-lite"/>
    </source>
</evidence>
<sequence>MSRRQGRETALQTLFMADVGRMEPAYALQYASEEFGISEAAAAFARELVEGAVANRETIDGNIRRLAKEWNLERMPHVDRNLLRVAIFEMLFREDIPLNAAINEAIELAKIYANEESAKFVNGILGQLARELREARGEKTSAQEGAPAAVTNRVTTPAPESTPVPDPDATPATTPVTTTVISETAANRETRSMAEEETQPPGVNEV</sequence>
<organism>
    <name type="scientific">Heliobacterium modesticaldum (strain ATCC 51547 / Ice1)</name>
    <dbReference type="NCBI Taxonomy" id="498761"/>
    <lineage>
        <taxon>Bacteria</taxon>
        <taxon>Bacillati</taxon>
        <taxon>Bacillota</taxon>
        <taxon>Clostridia</taxon>
        <taxon>Eubacteriales</taxon>
        <taxon>Heliobacteriaceae</taxon>
        <taxon>Heliomicrobium</taxon>
    </lineage>
</organism>
<protein>
    <recommendedName>
        <fullName evidence="1">Transcription antitermination protein NusB</fullName>
    </recommendedName>
    <alternativeName>
        <fullName evidence="1">Antitermination factor NusB</fullName>
    </alternativeName>
</protein>
<name>NUSB_HELMI</name>
<comment type="function">
    <text evidence="1">Involved in transcription antitermination. Required for transcription of ribosomal RNA (rRNA) genes. Binds specifically to the boxA antiterminator sequence of the ribosomal RNA (rrn) operons.</text>
</comment>
<comment type="similarity">
    <text evidence="1">Belongs to the NusB family.</text>
</comment>
<keyword id="KW-1185">Reference proteome</keyword>
<keyword id="KW-0694">RNA-binding</keyword>
<keyword id="KW-0804">Transcription</keyword>
<keyword id="KW-0889">Transcription antitermination</keyword>
<keyword id="KW-0805">Transcription regulation</keyword>
<accession>B0TEI6</accession>
<proteinExistence type="inferred from homology"/>
<reference key="1">
    <citation type="journal article" date="2008" name="J. Bacteriol.">
        <title>The genome of Heliobacterium modesticaldum, a phototrophic representative of the Firmicutes containing the simplest photosynthetic apparatus.</title>
        <authorList>
            <person name="Sattley W.M."/>
            <person name="Madigan M.T."/>
            <person name="Swingley W.D."/>
            <person name="Cheung P.C."/>
            <person name="Clocksin K.M."/>
            <person name="Conrad A.L."/>
            <person name="Dejesa L.C."/>
            <person name="Honchak B.M."/>
            <person name="Jung D.O."/>
            <person name="Karbach L.E."/>
            <person name="Kurdoglu A."/>
            <person name="Lahiri S."/>
            <person name="Mastrian S.D."/>
            <person name="Page L.E."/>
            <person name="Taylor H.L."/>
            <person name="Wang Z.T."/>
            <person name="Raymond J."/>
            <person name="Chen M."/>
            <person name="Blankenship R.E."/>
            <person name="Touchman J.W."/>
        </authorList>
    </citation>
    <scope>NUCLEOTIDE SEQUENCE [LARGE SCALE GENOMIC DNA]</scope>
    <source>
        <strain>ATCC 51547 / Ice1</strain>
    </source>
</reference>
<dbReference type="EMBL" id="CP000930">
    <property type="protein sequence ID" value="ABZ82905.1"/>
    <property type="molecule type" value="Genomic_DNA"/>
</dbReference>
<dbReference type="RefSeq" id="WP_012281647.1">
    <property type="nucleotide sequence ID" value="NC_010337.2"/>
</dbReference>
<dbReference type="SMR" id="B0TEI6"/>
<dbReference type="STRING" id="498761.HM1_0286"/>
<dbReference type="KEGG" id="hmo:HM1_0286"/>
<dbReference type="eggNOG" id="COG0781">
    <property type="taxonomic scope" value="Bacteria"/>
</dbReference>
<dbReference type="HOGENOM" id="CLU_087843_2_1_9"/>
<dbReference type="OrthoDB" id="9811381at2"/>
<dbReference type="Proteomes" id="UP000008550">
    <property type="component" value="Chromosome"/>
</dbReference>
<dbReference type="GO" id="GO:0005829">
    <property type="term" value="C:cytosol"/>
    <property type="evidence" value="ECO:0007669"/>
    <property type="project" value="TreeGrafter"/>
</dbReference>
<dbReference type="GO" id="GO:0003723">
    <property type="term" value="F:RNA binding"/>
    <property type="evidence" value="ECO:0007669"/>
    <property type="project" value="UniProtKB-UniRule"/>
</dbReference>
<dbReference type="GO" id="GO:0006353">
    <property type="term" value="P:DNA-templated transcription termination"/>
    <property type="evidence" value="ECO:0007669"/>
    <property type="project" value="UniProtKB-UniRule"/>
</dbReference>
<dbReference type="GO" id="GO:0031564">
    <property type="term" value="P:transcription antitermination"/>
    <property type="evidence" value="ECO:0007669"/>
    <property type="project" value="UniProtKB-KW"/>
</dbReference>
<dbReference type="Gene3D" id="1.10.940.10">
    <property type="entry name" value="NusB-like"/>
    <property type="match status" value="1"/>
</dbReference>
<dbReference type="HAMAP" id="MF_00073">
    <property type="entry name" value="NusB"/>
    <property type="match status" value="1"/>
</dbReference>
<dbReference type="InterPro" id="IPR035926">
    <property type="entry name" value="NusB-like_sf"/>
</dbReference>
<dbReference type="InterPro" id="IPR011605">
    <property type="entry name" value="NusB_fam"/>
</dbReference>
<dbReference type="InterPro" id="IPR006027">
    <property type="entry name" value="NusB_RsmB_TIM44"/>
</dbReference>
<dbReference type="NCBIfam" id="TIGR01951">
    <property type="entry name" value="nusB"/>
    <property type="match status" value="1"/>
</dbReference>
<dbReference type="PANTHER" id="PTHR11078:SF3">
    <property type="entry name" value="ANTITERMINATION NUSB DOMAIN-CONTAINING PROTEIN"/>
    <property type="match status" value="1"/>
</dbReference>
<dbReference type="PANTHER" id="PTHR11078">
    <property type="entry name" value="N UTILIZATION SUBSTANCE PROTEIN B-RELATED"/>
    <property type="match status" value="1"/>
</dbReference>
<dbReference type="Pfam" id="PF01029">
    <property type="entry name" value="NusB"/>
    <property type="match status" value="1"/>
</dbReference>
<dbReference type="SUPFAM" id="SSF48013">
    <property type="entry name" value="NusB-like"/>
    <property type="match status" value="1"/>
</dbReference>
<feature type="chain" id="PRO_1000092556" description="Transcription antitermination protein NusB">
    <location>
        <begin position="1"/>
        <end position="206"/>
    </location>
</feature>
<feature type="region of interest" description="Disordered" evidence="2">
    <location>
        <begin position="135"/>
        <end position="206"/>
    </location>
</feature>
<feature type="compositionally biased region" description="Low complexity" evidence="2">
    <location>
        <begin position="169"/>
        <end position="180"/>
    </location>
</feature>
<gene>
    <name evidence="1" type="primary">nusB</name>
    <name type="ordered locus">Helmi_04790</name>
    <name type="ORF">HM1_0286</name>
</gene>